<comment type="function">
    <text evidence="3">Part of the cluster that mediates the biosynthesis of a highly modified cyclo-arginine-tryptophan dipeptide (cRW) (PubMed:36702957). The first step of the pathway is perfornmed by the arginine-containing cyclodipeptide synthase (RCPDS) avaA that acts as the scaffold-generating enzyme and is responsible for formation of the cyclo-Arg-Trp (cRW) diketopiperazine. AvaB then acts as a multifunctional flavoenzyme that is responsible for generating the cyclo-Arg-formylkynurenine DKP, which can be deformylated by avaC. AvaB then further catalyzes an additional N-oxidation followed by cyclization and dehydration. The next step is an N-acetylation of the guanidine group catalyzed by the arginine N-acetyltransferase avaD. The roles of the additional enzymes identified within the ava cluster still have to be determined (PubMed:36702957).</text>
</comment>
<comment type="pathway">
    <text evidence="5">Secondary metabolite biosynthesis.</text>
</comment>
<comment type="subcellular location">
    <subcellularLocation>
        <location evidence="1">Membrane</location>
        <topology evidence="1">Multi-pass membrane protein</topology>
    </subcellularLocation>
</comment>
<reference key="1">
    <citation type="journal article" date="2023" name="Nat. Chem. Biol.">
        <title>Genome mining for unknown-unknown natural products.</title>
        <authorList>
            <person name="Yee D.A."/>
            <person name="Niwa K."/>
            <person name="Perlatti B."/>
            <person name="Chen M."/>
            <person name="Li Y."/>
            <person name="Tang Y."/>
        </authorList>
    </citation>
    <scope>NUCLEOTIDE SEQUENCE [GENOMIC DNA]</scope>
    <scope>FUNCTION</scope>
    <source>
        <strain>dI-29</strain>
    </source>
</reference>
<evidence type="ECO:0000255" key="1"/>
<evidence type="ECO:0000255" key="2">
    <source>
        <dbReference type="PROSITE-ProRule" id="PRU00498"/>
    </source>
</evidence>
<evidence type="ECO:0000269" key="3">
    <source>
    </source>
</evidence>
<evidence type="ECO:0000303" key="4">
    <source>
    </source>
</evidence>
<evidence type="ECO:0000305" key="5">
    <source>
    </source>
</evidence>
<organism>
    <name type="scientific">Aspergillus versicolor</name>
    <dbReference type="NCBI Taxonomy" id="46472"/>
    <lineage>
        <taxon>Eukaryota</taxon>
        <taxon>Fungi</taxon>
        <taxon>Dikarya</taxon>
        <taxon>Ascomycota</taxon>
        <taxon>Pezizomycotina</taxon>
        <taxon>Eurotiomycetes</taxon>
        <taxon>Eurotiomycetidae</taxon>
        <taxon>Eurotiales</taxon>
        <taxon>Aspergillaceae</taxon>
        <taxon>Aspergillus</taxon>
        <taxon>Aspergillus subgen. Nidulantes</taxon>
    </lineage>
</organism>
<keyword id="KW-0325">Glycoprotein</keyword>
<keyword id="KW-0472">Membrane</keyword>
<keyword id="KW-0812">Transmembrane</keyword>
<keyword id="KW-1133">Transmembrane helix</keyword>
<name>AVAG_ASPVE</name>
<dbReference type="EMBL" id="OP596311">
    <property type="protein sequence ID" value="UZP48219.1"/>
    <property type="molecule type" value="Genomic_DNA"/>
</dbReference>
<dbReference type="GO" id="GO:0016020">
    <property type="term" value="C:membrane"/>
    <property type="evidence" value="ECO:0007669"/>
    <property type="project" value="UniProtKB-SubCell"/>
</dbReference>
<proteinExistence type="inferred from homology"/>
<feature type="chain" id="PRO_0000461007" description="Ava biosynthesis cluster protein G">
    <location>
        <begin position="1"/>
        <end position="340"/>
    </location>
</feature>
<feature type="transmembrane region" description="Helical" evidence="1">
    <location>
        <begin position="15"/>
        <end position="35"/>
    </location>
</feature>
<feature type="transmembrane region" description="Helical" evidence="1">
    <location>
        <begin position="81"/>
        <end position="101"/>
    </location>
</feature>
<feature type="transmembrane region" description="Helical" evidence="1">
    <location>
        <begin position="118"/>
        <end position="138"/>
    </location>
</feature>
<feature type="transmembrane region" description="Helical" evidence="1">
    <location>
        <begin position="148"/>
        <end position="168"/>
    </location>
</feature>
<feature type="transmembrane region" description="Helical" evidence="1">
    <location>
        <begin position="219"/>
        <end position="239"/>
    </location>
</feature>
<feature type="transmembrane region" description="Helical" evidence="1">
    <location>
        <begin position="315"/>
        <end position="335"/>
    </location>
</feature>
<feature type="glycosylation site" description="N-linked (GlcNAc...) asparagine" evidence="2">
    <location>
        <position position="171"/>
    </location>
</feature>
<protein>
    <recommendedName>
        <fullName evidence="4">Ava biosynthesis cluster protein G</fullName>
    </recommendedName>
</protein>
<gene>
    <name evidence="4" type="primary">avaG</name>
</gene>
<sequence length="340" mass="37588">MAPANNPKGLGFQKWSAFWLWAIIGGYFAAFNIWNMRKLDFEGSFQVNSLPGEYAWMKRTAGFVSRASRMRFAWVPVQLLFMISTDFITSACSVIALLQFVPQLRKKYMSIHRMLGEAFFVMMGFGAPSGIMVAVHAFGAAENPSVRLSIMLTGVLTICFLATSFLCITTNGTLSRLRLKLHGASNPDAQDLQKYRAIDIRRHREFILRTLAVMSTGSFSSVYLIIPEVMNWTLGYVAFSCGTLVEDLGLGASYLRSAYPACMVENGGHAGTIVAVKADLSGSEEELTAWGRAGIGMAFWGALVLHMVLAEIYVSALTAVCLLLRYVGLILWLQIRVKSR</sequence>
<accession>P9WEK8</accession>